<proteinExistence type="inferred from homology"/>
<feature type="chain" id="PRO_1000124733" description="Aspartate 1-decarboxylase beta chain" evidence="1">
    <location>
        <begin position="1"/>
        <end position="24"/>
    </location>
</feature>
<feature type="chain" id="PRO_1000124734" description="Aspartate 1-decarboxylase alpha chain" evidence="1">
    <location>
        <begin position="25"/>
        <end position="126"/>
    </location>
</feature>
<feature type="active site" description="Schiff-base intermediate with substrate; via pyruvic acid" evidence="1">
    <location>
        <position position="25"/>
    </location>
</feature>
<feature type="active site" description="Proton donor" evidence="1">
    <location>
        <position position="58"/>
    </location>
</feature>
<feature type="binding site" evidence="1">
    <location>
        <position position="57"/>
    </location>
    <ligand>
        <name>substrate</name>
    </ligand>
</feature>
<feature type="binding site" evidence="1">
    <location>
        <begin position="73"/>
        <end position="75"/>
    </location>
    <ligand>
        <name>substrate</name>
    </ligand>
</feature>
<feature type="modified residue" description="Pyruvic acid (Ser)" evidence="1">
    <location>
        <position position="25"/>
    </location>
</feature>
<name>PAND_ACIB3</name>
<organism>
    <name type="scientific">Acinetobacter baumannii (strain AB307-0294)</name>
    <dbReference type="NCBI Taxonomy" id="557600"/>
    <lineage>
        <taxon>Bacteria</taxon>
        <taxon>Pseudomonadati</taxon>
        <taxon>Pseudomonadota</taxon>
        <taxon>Gammaproteobacteria</taxon>
        <taxon>Moraxellales</taxon>
        <taxon>Moraxellaceae</taxon>
        <taxon>Acinetobacter</taxon>
        <taxon>Acinetobacter calcoaceticus/baumannii complex</taxon>
    </lineage>
</organism>
<dbReference type="EC" id="4.1.1.11" evidence="1"/>
<dbReference type="EMBL" id="CP001172">
    <property type="protein sequence ID" value="ACJ56419.1"/>
    <property type="molecule type" value="Genomic_DNA"/>
</dbReference>
<dbReference type="RefSeq" id="WP_000952665.1">
    <property type="nucleotide sequence ID" value="NZ_CP001172.1"/>
</dbReference>
<dbReference type="SMR" id="B7GYR1"/>
<dbReference type="HOGENOM" id="CLU_115305_2_1_6"/>
<dbReference type="UniPathway" id="UPA00028">
    <property type="reaction ID" value="UER00002"/>
</dbReference>
<dbReference type="Proteomes" id="UP000006924">
    <property type="component" value="Chromosome"/>
</dbReference>
<dbReference type="GO" id="GO:0005829">
    <property type="term" value="C:cytosol"/>
    <property type="evidence" value="ECO:0007669"/>
    <property type="project" value="TreeGrafter"/>
</dbReference>
<dbReference type="GO" id="GO:0004068">
    <property type="term" value="F:aspartate 1-decarboxylase activity"/>
    <property type="evidence" value="ECO:0007669"/>
    <property type="project" value="UniProtKB-UniRule"/>
</dbReference>
<dbReference type="GO" id="GO:0006523">
    <property type="term" value="P:alanine biosynthetic process"/>
    <property type="evidence" value="ECO:0007669"/>
    <property type="project" value="InterPro"/>
</dbReference>
<dbReference type="GO" id="GO:0015940">
    <property type="term" value="P:pantothenate biosynthetic process"/>
    <property type="evidence" value="ECO:0007669"/>
    <property type="project" value="UniProtKB-UniRule"/>
</dbReference>
<dbReference type="CDD" id="cd06919">
    <property type="entry name" value="Asp_decarbox"/>
    <property type="match status" value="1"/>
</dbReference>
<dbReference type="Gene3D" id="2.40.40.20">
    <property type="match status" value="1"/>
</dbReference>
<dbReference type="HAMAP" id="MF_00446">
    <property type="entry name" value="PanD"/>
    <property type="match status" value="1"/>
</dbReference>
<dbReference type="InterPro" id="IPR009010">
    <property type="entry name" value="Asp_de-COase-like_dom_sf"/>
</dbReference>
<dbReference type="InterPro" id="IPR003190">
    <property type="entry name" value="Asp_decarbox"/>
</dbReference>
<dbReference type="NCBIfam" id="TIGR00223">
    <property type="entry name" value="panD"/>
    <property type="match status" value="1"/>
</dbReference>
<dbReference type="PANTHER" id="PTHR21012">
    <property type="entry name" value="ASPARTATE 1-DECARBOXYLASE"/>
    <property type="match status" value="1"/>
</dbReference>
<dbReference type="PANTHER" id="PTHR21012:SF0">
    <property type="entry name" value="ASPARTATE 1-DECARBOXYLASE"/>
    <property type="match status" value="1"/>
</dbReference>
<dbReference type="Pfam" id="PF02261">
    <property type="entry name" value="Asp_decarbox"/>
    <property type="match status" value="1"/>
</dbReference>
<dbReference type="PIRSF" id="PIRSF006246">
    <property type="entry name" value="Asp_decarbox"/>
    <property type="match status" value="1"/>
</dbReference>
<dbReference type="SUPFAM" id="SSF50692">
    <property type="entry name" value="ADC-like"/>
    <property type="match status" value="1"/>
</dbReference>
<protein>
    <recommendedName>
        <fullName evidence="1">Aspartate 1-decarboxylase</fullName>
        <ecNumber evidence="1">4.1.1.11</ecNumber>
    </recommendedName>
    <alternativeName>
        <fullName evidence="1">Aspartate alpha-decarboxylase</fullName>
    </alternativeName>
    <component>
        <recommendedName>
            <fullName evidence="1">Aspartate 1-decarboxylase beta chain</fullName>
        </recommendedName>
    </component>
    <component>
        <recommendedName>
            <fullName evidence="1">Aspartate 1-decarboxylase alpha chain</fullName>
        </recommendedName>
    </component>
</protein>
<sequence>MLSRLLKCKIHRAVVTHAELHYEGSCAIDGVLMDLAGIREYEEIHVWNVTNGKRFTTYAIRGEDNSGIISVNGGAAHQADVGDLVIIATFGDFTEAEANVHKPRLVYANPDNTVNHTANCIPVQVA</sequence>
<evidence type="ECO:0000255" key="1">
    <source>
        <dbReference type="HAMAP-Rule" id="MF_00446"/>
    </source>
</evidence>
<comment type="function">
    <text evidence="1">Catalyzes the pyruvoyl-dependent decarboxylation of aspartate to produce beta-alanine.</text>
</comment>
<comment type="catalytic activity">
    <reaction evidence="1">
        <text>L-aspartate + H(+) = beta-alanine + CO2</text>
        <dbReference type="Rhea" id="RHEA:19497"/>
        <dbReference type="ChEBI" id="CHEBI:15378"/>
        <dbReference type="ChEBI" id="CHEBI:16526"/>
        <dbReference type="ChEBI" id="CHEBI:29991"/>
        <dbReference type="ChEBI" id="CHEBI:57966"/>
        <dbReference type="EC" id="4.1.1.11"/>
    </reaction>
</comment>
<comment type="cofactor">
    <cofactor evidence="1">
        <name>pyruvate</name>
        <dbReference type="ChEBI" id="CHEBI:15361"/>
    </cofactor>
    <text evidence="1">Binds 1 pyruvoyl group covalently per subunit.</text>
</comment>
<comment type="pathway">
    <text evidence="1">Cofactor biosynthesis; (R)-pantothenate biosynthesis; beta-alanine from L-aspartate: step 1/1.</text>
</comment>
<comment type="subunit">
    <text evidence="1">Heterooctamer of four alpha and four beta subunits.</text>
</comment>
<comment type="subcellular location">
    <subcellularLocation>
        <location evidence="1">Cytoplasm</location>
    </subcellularLocation>
</comment>
<comment type="PTM">
    <text evidence="1">Is synthesized initially as an inactive proenzyme, which is activated by self-cleavage at a specific serine bond to produce a beta-subunit with a hydroxyl group at its C-terminus and an alpha-subunit with a pyruvoyl group at its N-terminus.</text>
</comment>
<comment type="similarity">
    <text evidence="1">Belongs to the PanD family.</text>
</comment>
<accession>B7GYR1</accession>
<reference key="1">
    <citation type="journal article" date="2008" name="J. Bacteriol.">
        <title>Comparative genome sequence analysis of multidrug-resistant Acinetobacter baumannii.</title>
        <authorList>
            <person name="Adams M.D."/>
            <person name="Goglin K."/>
            <person name="Molyneaux N."/>
            <person name="Hujer K.M."/>
            <person name="Lavender H."/>
            <person name="Jamison J.J."/>
            <person name="MacDonald I.J."/>
            <person name="Martin K.M."/>
            <person name="Russo T."/>
            <person name="Campagnari A.A."/>
            <person name="Hujer A.M."/>
            <person name="Bonomo R.A."/>
            <person name="Gill S.R."/>
        </authorList>
    </citation>
    <scope>NUCLEOTIDE SEQUENCE [LARGE SCALE GENOMIC DNA]</scope>
    <source>
        <strain>AB307-0294</strain>
    </source>
</reference>
<keyword id="KW-0068">Autocatalytic cleavage</keyword>
<keyword id="KW-0963">Cytoplasm</keyword>
<keyword id="KW-0210">Decarboxylase</keyword>
<keyword id="KW-0456">Lyase</keyword>
<keyword id="KW-0566">Pantothenate biosynthesis</keyword>
<keyword id="KW-0670">Pyruvate</keyword>
<keyword id="KW-0704">Schiff base</keyword>
<keyword id="KW-0865">Zymogen</keyword>
<gene>
    <name evidence="1" type="primary">panD</name>
    <name type="ordered locus">ABBFA_002786</name>
</gene>